<keyword id="KW-0029">Amino-acid transport</keyword>
<keyword id="KW-0067">ATP-binding</keyword>
<keyword id="KW-1003">Cell membrane</keyword>
<keyword id="KW-0472">Membrane</keyword>
<keyword id="KW-0547">Nucleotide-binding</keyword>
<keyword id="KW-1185">Reference proteome</keyword>
<keyword id="KW-1278">Translocase</keyword>
<keyword id="KW-0813">Transport</keyword>
<organism>
    <name type="scientific">Shouchella clausii (strain KSM-K16)</name>
    <name type="common">Alkalihalobacillus clausii</name>
    <dbReference type="NCBI Taxonomy" id="66692"/>
    <lineage>
        <taxon>Bacteria</taxon>
        <taxon>Bacillati</taxon>
        <taxon>Bacillota</taxon>
        <taxon>Bacilli</taxon>
        <taxon>Bacillales</taxon>
        <taxon>Bacillaceae</taxon>
        <taxon>Shouchella</taxon>
    </lineage>
</organism>
<feature type="chain" id="PRO_0000270242" description="Methionine import ATP-binding protein MetN 2">
    <location>
        <begin position="1"/>
        <end position="341"/>
    </location>
</feature>
<feature type="domain" description="ABC transporter" evidence="1">
    <location>
        <begin position="2"/>
        <end position="241"/>
    </location>
</feature>
<feature type="binding site" evidence="1">
    <location>
        <begin position="38"/>
        <end position="45"/>
    </location>
    <ligand>
        <name>ATP</name>
        <dbReference type="ChEBI" id="CHEBI:30616"/>
    </ligand>
</feature>
<protein>
    <recommendedName>
        <fullName evidence="1">Methionine import ATP-binding protein MetN 2</fullName>
        <ecNumber evidence="1">7.4.2.11</ecNumber>
    </recommendedName>
</protein>
<comment type="function">
    <text evidence="1">Part of the ABC transporter complex MetNIQ involved in methionine import. Responsible for energy coupling to the transport system.</text>
</comment>
<comment type="catalytic activity">
    <reaction evidence="1">
        <text>L-methionine(out) + ATP + H2O = L-methionine(in) + ADP + phosphate + H(+)</text>
        <dbReference type="Rhea" id="RHEA:29779"/>
        <dbReference type="ChEBI" id="CHEBI:15377"/>
        <dbReference type="ChEBI" id="CHEBI:15378"/>
        <dbReference type="ChEBI" id="CHEBI:30616"/>
        <dbReference type="ChEBI" id="CHEBI:43474"/>
        <dbReference type="ChEBI" id="CHEBI:57844"/>
        <dbReference type="ChEBI" id="CHEBI:456216"/>
        <dbReference type="EC" id="7.4.2.11"/>
    </reaction>
</comment>
<comment type="catalytic activity">
    <reaction evidence="1">
        <text>D-methionine(out) + ATP + H2O = D-methionine(in) + ADP + phosphate + H(+)</text>
        <dbReference type="Rhea" id="RHEA:29767"/>
        <dbReference type="ChEBI" id="CHEBI:15377"/>
        <dbReference type="ChEBI" id="CHEBI:15378"/>
        <dbReference type="ChEBI" id="CHEBI:30616"/>
        <dbReference type="ChEBI" id="CHEBI:43474"/>
        <dbReference type="ChEBI" id="CHEBI:57932"/>
        <dbReference type="ChEBI" id="CHEBI:456216"/>
        <dbReference type="EC" id="7.4.2.11"/>
    </reaction>
</comment>
<comment type="subunit">
    <text evidence="1">The complex is composed of two ATP-binding proteins (MetN), two transmembrane proteins (MetI) and a solute-binding protein (MetQ).</text>
</comment>
<comment type="subcellular location">
    <subcellularLocation>
        <location evidence="1">Cell membrane</location>
        <topology evidence="1">Peripheral membrane protein</topology>
    </subcellularLocation>
</comment>
<comment type="similarity">
    <text evidence="1">Belongs to the ABC transporter superfamily. Methionine importer (TC 3.A.1.24) family.</text>
</comment>
<accession>Q5WJP0</accession>
<proteinExistence type="inferred from homology"/>
<sequence>MIEASELTKVYKTKKKRVIGVDNVSFKVGKGEIFGIVGYSGAGKSSLLRCINLLERPTSGTIRVDGLDLTKLGTRELRQARLKIGMIFQHFYLINQKTVFGNIAFALKAAGVRADLIPARVEELLELVGLSNKRNAYPAQLSGGQKQRVGIARALANKPSVLLCDEATSALDPTTTKSILALLKKLNEELGLTIVLITHEMAVVKEICHKMAIMQDGKMIEQGDVYDVFAAPKAPLTQEFIGDVVSFHIPEHTLSQFSGTIAKVIFKGSVAQQGIISDTLQQFSVKGNFLHGAIEYIGGRPLGIFIMELKGEPTAIQEAIAYIKQRSAEVEVIRDGLRAFS</sequence>
<name>METN2_SHOC1</name>
<dbReference type="EC" id="7.4.2.11" evidence="1"/>
<dbReference type="EMBL" id="AP006627">
    <property type="protein sequence ID" value="BAD63415.1"/>
    <property type="molecule type" value="Genomic_DNA"/>
</dbReference>
<dbReference type="RefSeq" id="WP_011245731.1">
    <property type="nucleotide sequence ID" value="NC_006582.1"/>
</dbReference>
<dbReference type="SMR" id="Q5WJP0"/>
<dbReference type="STRING" id="66692.ABC0876"/>
<dbReference type="KEGG" id="bcl:ABC0876"/>
<dbReference type="eggNOG" id="COG1135">
    <property type="taxonomic scope" value="Bacteria"/>
</dbReference>
<dbReference type="HOGENOM" id="CLU_000604_1_3_9"/>
<dbReference type="OrthoDB" id="9802264at2"/>
<dbReference type="Proteomes" id="UP000001168">
    <property type="component" value="Chromosome"/>
</dbReference>
<dbReference type="GO" id="GO:0005886">
    <property type="term" value="C:plasma membrane"/>
    <property type="evidence" value="ECO:0007669"/>
    <property type="project" value="UniProtKB-SubCell"/>
</dbReference>
<dbReference type="GO" id="GO:0033232">
    <property type="term" value="F:ABC-type D-methionine transporter activity"/>
    <property type="evidence" value="ECO:0007669"/>
    <property type="project" value="UniProtKB-EC"/>
</dbReference>
<dbReference type="GO" id="GO:0005524">
    <property type="term" value="F:ATP binding"/>
    <property type="evidence" value="ECO:0007669"/>
    <property type="project" value="UniProtKB-KW"/>
</dbReference>
<dbReference type="GO" id="GO:0016887">
    <property type="term" value="F:ATP hydrolysis activity"/>
    <property type="evidence" value="ECO:0007669"/>
    <property type="project" value="InterPro"/>
</dbReference>
<dbReference type="CDD" id="cd03258">
    <property type="entry name" value="ABC_MetN_methionine_transporter"/>
    <property type="match status" value="1"/>
</dbReference>
<dbReference type="FunFam" id="3.40.50.300:FF:000056">
    <property type="entry name" value="Cell division ATP-binding protein FtsE"/>
    <property type="match status" value="1"/>
</dbReference>
<dbReference type="Gene3D" id="3.30.70.260">
    <property type="match status" value="1"/>
</dbReference>
<dbReference type="Gene3D" id="3.40.50.300">
    <property type="entry name" value="P-loop containing nucleotide triphosphate hydrolases"/>
    <property type="match status" value="1"/>
</dbReference>
<dbReference type="InterPro" id="IPR003593">
    <property type="entry name" value="AAA+_ATPase"/>
</dbReference>
<dbReference type="InterPro" id="IPR003439">
    <property type="entry name" value="ABC_transporter-like_ATP-bd"/>
</dbReference>
<dbReference type="InterPro" id="IPR017871">
    <property type="entry name" value="ABC_transporter-like_CS"/>
</dbReference>
<dbReference type="InterPro" id="IPR045865">
    <property type="entry name" value="ACT-like_dom_sf"/>
</dbReference>
<dbReference type="InterPro" id="IPR041701">
    <property type="entry name" value="MetN_ABC"/>
</dbReference>
<dbReference type="InterPro" id="IPR050086">
    <property type="entry name" value="MetN_ABC_transporter-like"/>
</dbReference>
<dbReference type="InterPro" id="IPR018449">
    <property type="entry name" value="NIL_domain"/>
</dbReference>
<dbReference type="InterPro" id="IPR027417">
    <property type="entry name" value="P-loop_NTPase"/>
</dbReference>
<dbReference type="PANTHER" id="PTHR43166">
    <property type="entry name" value="AMINO ACID IMPORT ATP-BINDING PROTEIN"/>
    <property type="match status" value="1"/>
</dbReference>
<dbReference type="PANTHER" id="PTHR43166:SF30">
    <property type="entry name" value="METHIONINE IMPORT ATP-BINDING PROTEIN METN"/>
    <property type="match status" value="1"/>
</dbReference>
<dbReference type="Pfam" id="PF00005">
    <property type="entry name" value="ABC_tran"/>
    <property type="match status" value="1"/>
</dbReference>
<dbReference type="Pfam" id="PF09383">
    <property type="entry name" value="NIL"/>
    <property type="match status" value="1"/>
</dbReference>
<dbReference type="SMART" id="SM00382">
    <property type="entry name" value="AAA"/>
    <property type="match status" value="1"/>
</dbReference>
<dbReference type="SMART" id="SM00930">
    <property type="entry name" value="NIL"/>
    <property type="match status" value="1"/>
</dbReference>
<dbReference type="SUPFAM" id="SSF55021">
    <property type="entry name" value="ACT-like"/>
    <property type="match status" value="1"/>
</dbReference>
<dbReference type="SUPFAM" id="SSF52540">
    <property type="entry name" value="P-loop containing nucleoside triphosphate hydrolases"/>
    <property type="match status" value="1"/>
</dbReference>
<dbReference type="PROSITE" id="PS00211">
    <property type="entry name" value="ABC_TRANSPORTER_1"/>
    <property type="match status" value="1"/>
</dbReference>
<dbReference type="PROSITE" id="PS50893">
    <property type="entry name" value="ABC_TRANSPORTER_2"/>
    <property type="match status" value="1"/>
</dbReference>
<dbReference type="PROSITE" id="PS51264">
    <property type="entry name" value="METN"/>
    <property type="match status" value="1"/>
</dbReference>
<gene>
    <name evidence="1" type="primary">metN2</name>
    <name type="ordered locus">ABC0876</name>
</gene>
<reference key="1">
    <citation type="submission" date="2003-10" db="EMBL/GenBank/DDBJ databases">
        <title>The complete genome sequence of the alkaliphilic Bacillus clausii KSM-K16.</title>
        <authorList>
            <person name="Takaki Y."/>
            <person name="Kageyama Y."/>
            <person name="Shimamura S."/>
            <person name="Suzuki H."/>
            <person name="Nishi S."/>
            <person name="Hatada Y."/>
            <person name="Kawai S."/>
            <person name="Ito S."/>
            <person name="Horikoshi K."/>
        </authorList>
    </citation>
    <scope>NUCLEOTIDE SEQUENCE [LARGE SCALE GENOMIC DNA]</scope>
    <source>
        <strain>KSM-K16</strain>
    </source>
</reference>
<evidence type="ECO:0000255" key="1">
    <source>
        <dbReference type="HAMAP-Rule" id="MF_01719"/>
    </source>
</evidence>